<comment type="function">
    <text evidence="1">CRISPR (clustered regularly interspaced short palindromic repeat), is an adaptive immune system that provides protection against mobile genetic elements (viruses, transposable elements and conjugative plasmids). CRISPR clusters contain sequences complementary to antecedent mobile elements and target invading nucleic acids. CRISPR clusters are transcribed and processed into CRISPR RNA (crRNA). Functions as a ssRNA-specific endoribonuclease. Involved in the integration of spacer DNA into the CRISPR cassette.</text>
</comment>
<comment type="cofactor">
    <cofactor evidence="1">
        <name>Mg(2+)</name>
        <dbReference type="ChEBI" id="CHEBI:18420"/>
    </cofactor>
</comment>
<comment type="subunit">
    <text evidence="1">Homodimer, forms a heterotetramer with a Cas1 homodimer.</text>
</comment>
<comment type="similarity">
    <text evidence="1">Belongs to the CRISPR-associated endoribonuclease Cas2 protein family.</text>
</comment>
<organism>
    <name type="scientific">Thermofilum pendens (strain DSM 2475 / Hrk 5)</name>
    <dbReference type="NCBI Taxonomy" id="368408"/>
    <lineage>
        <taxon>Archaea</taxon>
        <taxon>Thermoproteota</taxon>
        <taxon>Thermoprotei</taxon>
        <taxon>Thermofilales</taxon>
        <taxon>Thermofilaceae</taxon>
        <taxon>Thermofilum</taxon>
    </lineage>
</organism>
<protein>
    <recommendedName>
        <fullName evidence="1">CRISPR-associated endoribonuclease Cas2</fullName>
        <ecNumber evidence="1">3.1.-.-</ecNumber>
    </recommendedName>
</protein>
<accession>A1RZT9</accession>
<reference key="1">
    <citation type="journal article" date="2008" name="J. Bacteriol.">
        <title>Genome sequence of Thermofilum pendens reveals an exceptional loss of biosynthetic pathways without genome reduction.</title>
        <authorList>
            <person name="Anderson I."/>
            <person name="Rodriguez J."/>
            <person name="Susanti D."/>
            <person name="Porat I."/>
            <person name="Reich C."/>
            <person name="Ulrich L.E."/>
            <person name="Elkins J.G."/>
            <person name="Mavromatis K."/>
            <person name="Lykidis A."/>
            <person name="Kim E."/>
            <person name="Thompson L.S."/>
            <person name="Nolan M."/>
            <person name="Land M."/>
            <person name="Copeland A."/>
            <person name="Lapidus A."/>
            <person name="Lucas S."/>
            <person name="Detter C."/>
            <person name="Zhulin I.B."/>
            <person name="Olsen G.J."/>
            <person name="Whitman W."/>
            <person name="Mukhopadhyay B."/>
            <person name="Bristow J."/>
            <person name="Kyrpides N."/>
        </authorList>
    </citation>
    <scope>NUCLEOTIDE SEQUENCE [LARGE SCALE GENOMIC DNA]</scope>
    <source>
        <strain>DSM 2475 / Hrk 5</strain>
    </source>
</reference>
<keyword id="KW-0051">Antiviral defense</keyword>
<keyword id="KW-0255">Endonuclease</keyword>
<keyword id="KW-0378">Hydrolase</keyword>
<keyword id="KW-0460">Magnesium</keyword>
<keyword id="KW-0479">Metal-binding</keyword>
<keyword id="KW-0540">Nuclease</keyword>
<keyword id="KW-1185">Reference proteome</keyword>
<evidence type="ECO:0000255" key="1">
    <source>
        <dbReference type="HAMAP-Rule" id="MF_01471"/>
    </source>
</evidence>
<gene>
    <name evidence="1" type="primary">cas2</name>
    <name type="ordered locus">Tpen_1322</name>
</gene>
<dbReference type="EC" id="3.1.-.-" evidence="1"/>
<dbReference type="EMBL" id="CP000505">
    <property type="protein sequence ID" value="ABL78719.1"/>
    <property type="molecule type" value="Genomic_DNA"/>
</dbReference>
<dbReference type="RefSeq" id="WP_011752984.1">
    <property type="nucleotide sequence ID" value="NC_008698.1"/>
</dbReference>
<dbReference type="SMR" id="A1RZT9"/>
<dbReference type="STRING" id="368408.Tpen_1322"/>
<dbReference type="EnsemblBacteria" id="ABL78719">
    <property type="protein sequence ID" value="ABL78719"/>
    <property type="gene ID" value="Tpen_1322"/>
</dbReference>
<dbReference type="GeneID" id="4602002"/>
<dbReference type="KEGG" id="tpe:Tpen_1322"/>
<dbReference type="eggNOG" id="arCOG04194">
    <property type="taxonomic scope" value="Archaea"/>
</dbReference>
<dbReference type="HOGENOM" id="CLU_161124_2_3_2"/>
<dbReference type="OrthoDB" id="75992at2157"/>
<dbReference type="Proteomes" id="UP000000641">
    <property type="component" value="Chromosome"/>
</dbReference>
<dbReference type="GO" id="GO:0046872">
    <property type="term" value="F:metal ion binding"/>
    <property type="evidence" value="ECO:0007669"/>
    <property type="project" value="UniProtKB-UniRule"/>
</dbReference>
<dbReference type="GO" id="GO:0004521">
    <property type="term" value="F:RNA endonuclease activity"/>
    <property type="evidence" value="ECO:0007669"/>
    <property type="project" value="InterPro"/>
</dbReference>
<dbReference type="GO" id="GO:0051607">
    <property type="term" value="P:defense response to virus"/>
    <property type="evidence" value="ECO:0007669"/>
    <property type="project" value="UniProtKB-UniRule"/>
</dbReference>
<dbReference type="GO" id="GO:0043571">
    <property type="term" value="P:maintenance of CRISPR repeat elements"/>
    <property type="evidence" value="ECO:0007669"/>
    <property type="project" value="UniProtKB-UniRule"/>
</dbReference>
<dbReference type="Gene3D" id="3.30.70.240">
    <property type="match status" value="1"/>
</dbReference>
<dbReference type="HAMAP" id="MF_01471">
    <property type="entry name" value="Cas2"/>
    <property type="match status" value="1"/>
</dbReference>
<dbReference type="InterPro" id="IPR021127">
    <property type="entry name" value="CRISPR_associated_Cas2"/>
</dbReference>
<dbReference type="InterPro" id="IPR019199">
    <property type="entry name" value="Virulence_VapD/CRISPR_Cas2"/>
</dbReference>
<dbReference type="NCBIfam" id="TIGR01573">
    <property type="entry name" value="cas2"/>
    <property type="match status" value="1"/>
</dbReference>
<dbReference type="PANTHER" id="PTHR34405">
    <property type="entry name" value="CRISPR-ASSOCIATED ENDORIBONUCLEASE CAS2"/>
    <property type="match status" value="1"/>
</dbReference>
<dbReference type="PANTHER" id="PTHR34405:SF3">
    <property type="entry name" value="CRISPR-ASSOCIATED ENDORIBONUCLEASE CAS2 3"/>
    <property type="match status" value="1"/>
</dbReference>
<dbReference type="Pfam" id="PF09827">
    <property type="entry name" value="CRISPR_Cas2"/>
    <property type="match status" value="1"/>
</dbReference>
<dbReference type="SUPFAM" id="SSF143430">
    <property type="entry name" value="TTP0101/SSO1404-like"/>
    <property type="match status" value="1"/>
</dbReference>
<name>CAS2_THEPD</name>
<feature type="chain" id="PRO_0000417753" description="CRISPR-associated endoribonuclease Cas2">
    <location>
        <begin position="1"/>
        <end position="93"/>
    </location>
</feature>
<feature type="binding site" evidence="1">
    <location>
        <position position="8"/>
    </location>
    <ligand>
        <name>Mg(2+)</name>
        <dbReference type="ChEBI" id="CHEBI:18420"/>
        <note>catalytic</note>
    </ligand>
</feature>
<proteinExistence type="inferred from homology"/>
<sequence>MIVIVAYDISDEDRRGRLRRYLRRLGLARVNRSVYAGPGTATTAELVAERAKEIVEEGDSVFVIVVREDEYQRAHVFDGRDYYIVSERKYEVY</sequence>